<sequence length="426" mass="48153">MLDNQLLRENPQYVATQLLKRGFQFDAVTFSQLEEKRKALQVSTQSLQNERNLRSKAIGEAKSRGENIEPMREEVNKLGAKLEQQKTELDEVLKQIEVISLSLPNIPHESVPVGKDELDNQEIRKWGDVPAFSFPVKSHDELGEALGQMDFALAAKITGSRFVVMKGHLARLHRALIQFMLDIHIQQHGYQEIYVPYIVNADSLLGTGQLPKFEADLFKLTGDNGYYLTSTSEIPVTNTVREMILSAEQLPIRYVCHSPCFRSEAGSYGKDTKGMIRQHQFEKVELVWITKPEDSYNALEQLTQHAEVILQRLNLPYRVVALCTGDIGAGSAKTYDLEVWLPSQNTYREISSCSNMEAFQARRMKARFRNPDTNEIQLVHTLNGSGLAVGRTLVAIMENYQDEHGNIHIPDALKPYLGGIDIISVK</sequence>
<keyword id="KW-0030">Aminoacyl-tRNA synthetase</keyword>
<keyword id="KW-0067">ATP-binding</keyword>
<keyword id="KW-0963">Cytoplasm</keyword>
<keyword id="KW-0436">Ligase</keyword>
<keyword id="KW-0547">Nucleotide-binding</keyword>
<keyword id="KW-0648">Protein biosynthesis</keyword>
<accession>A5IH84</accession>
<organism>
    <name type="scientific">Legionella pneumophila (strain Corby)</name>
    <dbReference type="NCBI Taxonomy" id="400673"/>
    <lineage>
        <taxon>Bacteria</taxon>
        <taxon>Pseudomonadati</taxon>
        <taxon>Pseudomonadota</taxon>
        <taxon>Gammaproteobacteria</taxon>
        <taxon>Legionellales</taxon>
        <taxon>Legionellaceae</taxon>
        <taxon>Legionella</taxon>
    </lineage>
</organism>
<reference key="1">
    <citation type="submission" date="2006-11" db="EMBL/GenBank/DDBJ databases">
        <title>Identification and characterization of a new conjugation/ type IVA secretion system (trb/tra) of L. pneumophila Corby localized on a mobile genomic island.</title>
        <authorList>
            <person name="Gloeckner G."/>
            <person name="Albert-Weissenberger C."/>
            <person name="Weinmann E."/>
            <person name="Jacobi S."/>
            <person name="Schunder E."/>
            <person name="Steinert M."/>
            <person name="Buchrieser C."/>
            <person name="Hacker J."/>
            <person name="Heuner K."/>
        </authorList>
    </citation>
    <scope>NUCLEOTIDE SEQUENCE [LARGE SCALE GENOMIC DNA]</scope>
    <source>
        <strain>Corby</strain>
    </source>
</reference>
<dbReference type="EC" id="6.1.1.11" evidence="1"/>
<dbReference type="EMBL" id="CP000675">
    <property type="protein sequence ID" value="ABQ56734.1"/>
    <property type="molecule type" value="Genomic_DNA"/>
</dbReference>
<dbReference type="RefSeq" id="WP_011945665.1">
    <property type="nucleotide sequence ID" value="NZ_JAPMSS010000006.1"/>
</dbReference>
<dbReference type="SMR" id="A5IH84"/>
<dbReference type="KEGG" id="lpc:LPC_2833"/>
<dbReference type="HOGENOM" id="CLU_023797_1_1_6"/>
<dbReference type="UniPathway" id="UPA00906">
    <property type="reaction ID" value="UER00895"/>
</dbReference>
<dbReference type="GO" id="GO:0005737">
    <property type="term" value="C:cytoplasm"/>
    <property type="evidence" value="ECO:0007669"/>
    <property type="project" value="UniProtKB-SubCell"/>
</dbReference>
<dbReference type="GO" id="GO:0005524">
    <property type="term" value="F:ATP binding"/>
    <property type="evidence" value="ECO:0007669"/>
    <property type="project" value="UniProtKB-UniRule"/>
</dbReference>
<dbReference type="GO" id="GO:0004828">
    <property type="term" value="F:serine-tRNA ligase activity"/>
    <property type="evidence" value="ECO:0007669"/>
    <property type="project" value="UniProtKB-UniRule"/>
</dbReference>
<dbReference type="GO" id="GO:0016260">
    <property type="term" value="P:selenocysteine biosynthetic process"/>
    <property type="evidence" value="ECO:0007669"/>
    <property type="project" value="UniProtKB-UniRule"/>
</dbReference>
<dbReference type="GO" id="GO:0006434">
    <property type="term" value="P:seryl-tRNA aminoacylation"/>
    <property type="evidence" value="ECO:0007669"/>
    <property type="project" value="UniProtKB-UniRule"/>
</dbReference>
<dbReference type="CDD" id="cd00770">
    <property type="entry name" value="SerRS_core"/>
    <property type="match status" value="1"/>
</dbReference>
<dbReference type="Gene3D" id="3.30.930.10">
    <property type="entry name" value="Bira Bifunctional Protein, Domain 2"/>
    <property type="match status" value="1"/>
</dbReference>
<dbReference type="Gene3D" id="1.10.287.40">
    <property type="entry name" value="Serine-tRNA synthetase, tRNA binding domain"/>
    <property type="match status" value="1"/>
</dbReference>
<dbReference type="HAMAP" id="MF_00176">
    <property type="entry name" value="Ser_tRNA_synth_type1"/>
    <property type="match status" value="1"/>
</dbReference>
<dbReference type="InterPro" id="IPR002314">
    <property type="entry name" value="aa-tRNA-synt_IIb"/>
</dbReference>
<dbReference type="InterPro" id="IPR006195">
    <property type="entry name" value="aa-tRNA-synth_II"/>
</dbReference>
<dbReference type="InterPro" id="IPR045864">
    <property type="entry name" value="aa-tRNA-synth_II/BPL/LPL"/>
</dbReference>
<dbReference type="InterPro" id="IPR002317">
    <property type="entry name" value="Ser-tRNA-ligase_type_1"/>
</dbReference>
<dbReference type="InterPro" id="IPR015866">
    <property type="entry name" value="Ser-tRNA-synth_1_N"/>
</dbReference>
<dbReference type="InterPro" id="IPR042103">
    <property type="entry name" value="SerRS_1_N_sf"/>
</dbReference>
<dbReference type="InterPro" id="IPR033729">
    <property type="entry name" value="SerRS_core"/>
</dbReference>
<dbReference type="InterPro" id="IPR010978">
    <property type="entry name" value="tRNA-bd_arm"/>
</dbReference>
<dbReference type="NCBIfam" id="TIGR00414">
    <property type="entry name" value="serS"/>
    <property type="match status" value="1"/>
</dbReference>
<dbReference type="PANTHER" id="PTHR43697:SF1">
    <property type="entry name" value="SERINE--TRNA LIGASE"/>
    <property type="match status" value="1"/>
</dbReference>
<dbReference type="PANTHER" id="PTHR43697">
    <property type="entry name" value="SERYL-TRNA SYNTHETASE"/>
    <property type="match status" value="1"/>
</dbReference>
<dbReference type="Pfam" id="PF02403">
    <property type="entry name" value="Seryl_tRNA_N"/>
    <property type="match status" value="1"/>
</dbReference>
<dbReference type="Pfam" id="PF00587">
    <property type="entry name" value="tRNA-synt_2b"/>
    <property type="match status" value="1"/>
</dbReference>
<dbReference type="PIRSF" id="PIRSF001529">
    <property type="entry name" value="Ser-tRNA-synth_IIa"/>
    <property type="match status" value="1"/>
</dbReference>
<dbReference type="PRINTS" id="PR00981">
    <property type="entry name" value="TRNASYNTHSER"/>
</dbReference>
<dbReference type="SUPFAM" id="SSF55681">
    <property type="entry name" value="Class II aaRS and biotin synthetases"/>
    <property type="match status" value="1"/>
</dbReference>
<dbReference type="SUPFAM" id="SSF46589">
    <property type="entry name" value="tRNA-binding arm"/>
    <property type="match status" value="1"/>
</dbReference>
<dbReference type="PROSITE" id="PS50862">
    <property type="entry name" value="AA_TRNA_LIGASE_II"/>
    <property type="match status" value="1"/>
</dbReference>
<evidence type="ECO:0000255" key="1">
    <source>
        <dbReference type="HAMAP-Rule" id="MF_00176"/>
    </source>
</evidence>
<name>SYS_LEGPC</name>
<proteinExistence type="inferred from homology"/>
<feature type="chain" id="PRO_1000019715" description="Serine--tRNA ligase">
    <location>
        <begin position="1"/>
        <end position="426"/>
    </location>
</feature>
<feature type="binding site" evidence="1">
    <location>
        <begin position="231"/>
        <end position="233"/>
    </location>
    <ligand>
        <name>L-serine</name>
        <dbReference type="ChEBI" id="CHEBI:33384"/>
    </ligand>
</feature>
<feature type="binding site" evidence="1">
    <location>
        <begin position="262"/>
        <end position="264"/>
    </location>
    <ligand>
        <name>ATP</name>
        <dbReference type="ChEBI" id="CHEBI:30616"/>
    </ligand>
</feature>
<feature type="binding site" evidence="1">
    <location>
        <position position="285"/>
    </location>
    <ligand>
        <name>L-serine</name>
        <dbReference type="ChEBI" id="CHEBI:33384"/>
    </ligand>
</feature>
<feature type="binding site" evidence="1">
    <location>
        <begin position="349"/>
        <end position="352"/>
    </location>
    <ligand>
        <name>ATP</name>
        <dbReference type="ChEBI" id="CHEBI:30616"/>
    </ligand>
</feature>
<feature type="binding site" evidence="1">
    <location>
        <position position="385"/>
    </location>
    <ligand>
        <name>L-serine</name>
        <dbReference type="ChEBI" id="CHEBI:33384"/>
    </ligand>
</feature>
<gene>
    <name evidence="1" type="primary">serS</name>
    <name type="ordered locus">LPC_2833</name>
</gene>
<protein>
    <recommendedName>
        <fullName evidence="1">Serine--tRNA ligase</fullName>
        <ecNumber evidence="1">6.1.1.11</ecNumber>
    </recommendedName>
    <alternativeName>
        <fullName evidence="1">Seryl-tRNA synthetase</fullName>
        <shortName evidence="1">SerRS</shortName>
    </alternativeName>
    <alternativeName>
        <fullName evidence="1">Seryl-tRNA(Ser/Sec) synthetase</fullName>
    </alternativeName>
</protein>
<comment type="function">
    <text evidence="1">Catalyzes the attachment of serine to tRNA(Ser). Is also able to aminoacylate tRNA(Sec) with serine, to form the misacylated tRNA L-seryl-tRNA(Sec), which will be further converted into selenocysteinyl-tRNA(Sec).</text>
</comment>
<comment type="catalytic activity">
    <reaction evidence="1">
        <text>tRNA(Ser) + L-serine + ATP = L-seryl-tRNA(Ser) + AMP + diphosphate + H(+)</text>
        <dbReference type="Rhea" id="RHEA:12292"/>
        <dbReference type="Rhea" id="RHEA-COMP:9669"/>
        <dbReference type="Rhea" id="RHEA-COMP:9703"/>
        <dbReference type="ChEBI" id="CHEBI:15378"/>
        <dbReference type="ChEBI" id="CHEBI:30616"/>
        <dbReference type="ChEBI" id="CHEBI:33019"/>
        <dbReference type="ChEBI" id="CHEBI:33384"/>
        <dbReference type="ChEBI" id="CHEBI:78442"/>
        <dbReference type="ChEBI" id="CHEBI:78533"/>
        <dbReference type="ChEBI" id="CHEBI:456215"/>
        <dbReference type="EC" id="6.1.1.11"/>
    </reaction>
</comment>
<comment type="catalytic activity">
    <reaction evidence="1">
        <text>tRNA(Sec) + L-serine + ATP = L-seryl-tRNA(Sec) + AMP + diphosphate + H(+)</text>
        <dbReference type="Rhea" id="RHEA:42580"/>
        <dbReference type="Rhea" id="RHEA-COMP:9742"/>
        <dbReference type="Rhea" id="RHEA-COMP:10128"/>
        <dbReference type="ChEBI" id="CHEBI:15378"/>
        <dbReference type="ChEBI" id="CHEBI:30616"/>
        <dbReference type="ChEBI" id="CHEBI:33019"/>
        <dbReference type="ChEBI" id="CHEBI:33384"/>
        <dbReference type="ChEBI" id="CHEBI:78442"/>
        <dbReference type="ChEBI" id="CHEBI:78533"/>
        <dbReference type="ChEBI" id="CHEBI:456215"/>
        <dbReference type="EC" id="6.1.1.11"/>
    </reaction>
</comment>
<comment type="pathway">
    <text evidence="1">Aminoacyl-tRNA biosynthesis; selenocysteinyl-tRNA(Sec) biosynthesis; L-seryl-tRNA(Sec) from L-serine and tRNA(Sec): step 1/1.</text>
</comment>
<comment type="subunit">
    <text evidence="1">Homodimer. The tRNA molecule binds across the dimer.</text>
</comment>
<comment type="subcellular location">
    <subcellularLocation>
        <location evidence="1">Cytoplasm</location>
    </subcellularLocation>
</comment>
<comment type="domain">
    <text evidence="1">Consists of two distinct domains, a catalytic core and a N-terminal extension that is involved in tRNA binding.</text>
</comment>
<comment type="similarity">
    <text evidence="1">Belongs to the class-II aminoacyl-tRNA synthetase family. Type-1 seryl-tRNA synthetase subfamily.</text>
</comment>